<accession>Q7LZG5</accession>
<feature type="chain" id="PRO_0000408026" description="Phospholipase A2 II-5b">
    <location>
        <begin position="1" status="less than"/>
        <end position="20" status="greater than"/>
    </location>
</feature>
<feature type="non-terminal residue">
    <location>
        <position position="1"/>
    </location>
</feature>
<feature type="non-terminal residue">
    <location>
        <position position="20"/>
    </location>
</feature>
<name>PA2_NOTSC</name>
<reference key="1">
    <citation type="journal article" date="1991" name="Toxicon">
        <title>Venom constituents of Notechis scutatus scutatus (Australian tiger snake) from differing geographic regions.</title>
        <authorList>
            <person name="Yang C.C."/>
            <person name="Chang L.S."/>
            <person name="Wu F.S."/>
        </authorList>
    </citation>
    <scope>PROTEIN SEQUENCE</scope>
    <scope>FUNCTION</scope>
    <scope>SUBCELLULAR LOCATION</scope>
    <scope>TISSUE SPECIFICITY</scope>
    <source>
        <tissue>Venom</tissue>
    </source>
</reference>
<keyword id="KW-0106">Calcium</keyword>
<keyword id="KW-0903">Direct protein sequencing</keyword>
<keyword id="KW-0378">Hydrolase</keyword>
<keyword id="KW-0442">Lipid degradation</keyword>
<keyword id="KW-0443">Lipid metabolism</keyword>
<keyword id="KW-0964">Secreted</keyword>
<protein>
    <recommendedName>
        <fullName>Phospholipase A2 II-5b</fullName>
        <shortName>svPLA2</shortName>
        <ecNumber>3.1.1.4</ecNumber>
    </recommendedName>
    <alternativeName>
        <fullName>Notechis II-5b non-toxic venom protein</fullName>
    </alternativeName>
    <alternativeName>
        <fullName>Phosphatidylcholine 2-acylhydrolase</fullName>
    </alternativeName>
</protein>
<evidence type="ECO:0000250" key="1"/>
<evidence type="ECO:0000255" key="2">
    <source>
        <dbReference type="PROSITE-ProRule" id="PRU10035"/>
    </source>
</evidence>
<evidence type="ECO:0000255" key="3">
    <source>
        <dbReference type="PROSITE-ProRule" id="PRU10036"/>
    </source>
</evidence>
<evidence type="ECO:0000269" key="4">
    <source>
    </source>
</evidence>
<evidence type="ECO:0000305" key="5"/>
<proteinExistence type="evidence at protein level"/>
<organism>
    <name type="scientific">Notechis scutatus scutatus</name>
    <name type="common">Mainland tiger snake</name>
    <name type="synonym">Common tiger snake</name>
    <dbReference type="NCBI Taxonomy" id="70142"/>
    <lineage>
        <taxon>Eukaryota</taxon>
        <taxon>Metazoa</taxon>
        <taxon>Chordata</taxon>
        <taxon>Craniata</taxon>
        <taxon>Vertebrata</taxon>
        <taxon>Euteleostomi</taxon>
        <taxon>Lepidosauria</taxon>
        <taxon>Squamata</taxon>
        <taxon>Bifurcata</taxon>
        <taxon>Unidentata</taxon>
        <taxon>Episquamata</taxon>
        <taxon>Toxicofera</taxon>
        <taxon>Serpentes</taxon>
        <taxon>Colubroidea</taxon>
        <taxon>Elapidae</taxon>
        <taxon>Hydrophiinae</taxon>
        <taxon>Notechis</taxon>
    </lineage>
</organism>
<comment type="function">
    <text evidence="4">Snake venom phospholipase A2 (PLA2) that exhibits weak enzymatic activity. PLA2 catalyzes the calcium-dependent hydrolysis of the 2-acyl groups in 3-sn-phosphoglycerides.</text>
</comment>
<comment type="catalytic activity">
    <reaction evidence="2 3">
        <text>a 1,2-diacyl-sn-glycero-3-phosphocholine + H2O = a 1-acyl-sn-glycero-3-phosphocholine + a fatty acid + H(+)</text>
        <dbReference type="Rhea" id="RHEA:15801"/>
        <dbReference type="ChEBI" id="CHEBI:15377"/>
        <dbReference type="ChEBI" id="CHEBI:15378"/>
        <dbReference type="ChEBI" id="CHEBI:28868"/>
        <dbReference type="ChEBI" id="CHEBI:57643"/>
        <dbReference type="ChEBI" id="CHEBI:58168"/>
        <dbReference type="EC" id="3.1.1.4"/>
    </reaction>
</comment>
<comment type="cofactor">
    <cofactor evidence="1">
        <name>Ca(2+)</name>
        <dbReference type="ChEBI" id="CHEBI:29108"/>
    </cofactor>
    <text evidence="1">Binds 1 Ca(2+) ion.</text>
</comment>
<comment type="subcellular location">
    <subcellularLocation>
        <location evidence="4">Secreted</location>
    </subcellularLocation>
</comment>
<comment type="tissue specificity">
    <text evidence="4">Expressed by the venom gland.</text>
</comment>
<comment type="similarity">
    <text evidence="5">Belongs to the phospholipase A2 family. Group I subfamily.</text>
</comment>
<dbReference type="EC" id="3.1.1.4"/>
<dbReference type="PIR" id="A39328">
    <property type="entry name" value="A39328"/>
</dbReference>
<dbReference type="GO" id="GO:0005576">
    <property type="term" value="C:extracellular region"/>
    <property type="evidence" value="ECO:0007669"/>
    <property type="project" value="UniProtKB-SubCell"/>
</dbReference>
<dbReference type="GO" id="GO:0004623">
    <property type="term" value="F:phospholipase A2 activity"/>
    <property type="evidence" value="ECO:0007669"/>
    <property type="project" value="UniProtKB-EC"/>
</dbReference>
<dbReference type="GO" id="GO:0016042">
    <property type="term" value="P:lipid catabolic process"/>
    <property type="evidence" value="ECO:0007669"/>
    <property type="project" value="UniProtKB-KW"/>
</dbReference>
<sequence>NLIQLSNMIKCAIPGSQPLF</sequence>